<accession>Q764T8</accession>
<proteinExistence type="evidence at protein level"/>
<feature type="chain" id="PRO_0000413995" description="Lupeol synthase">
    <location>
        <begin position="1"/>
        <end position="758"/>
    </location>
</feature>
<feature type="repeat" description="PFTB 1">
    <location>
        <begin position="149"/>
        <end position="190"/>
    </location>
</feature>
<feature type="repeat" description="PFTB 2">
    <location>
        <begin position="511"/>
        <end position="552"/>
    </location>
</feature>
<feature type="repeat" description="PFTB 3">
    <location>
        <begin position="588"/>
        <end position="628"/>
    </location>
</feature>
<feature type="repeat" description="PFTB 4">
    <location>
        <begin position="637"/>
        <end position="678"/>
    </location>
</feature>
<feature type="active site" description="Proton donor" evidence="1">
    <location>
        <position position="482"/>
    </location>
</feature>
<sequence length="758" mass="86688">MWKLKIGEGGAGLISVNNFIGRQHWEFDPNAGTPQEHAEIERLRREFTKNRFSIKQSADLLMRMQLRKENHYGTNNNIPAAVKLSDAENITVEALVTTITRAISFYSSIQAHDGHWPAESAGPLFFLQPLVMALYITGSLDDVLGPEHKKEIVRYLYNHQNEDGGWGFHIEGHSTMFGSALSYVALRILGEGPQDKAMAKGRKWILDHGGLVAIPSWGKFWVTVLGAYEWSGCNPLPPELWLLPKFAPFHPGKMLCYCRLVYMPMSYLYGKKFVGPITALIRSLREELYNEPYNQINWNTARNTVAKEDLYYPHPLIQDMLWGFLYHVGERFLNCWPFSMLRRKALEIAINHVHYEDENSRYLCIGSVEKVLCLIARWVEDPNSEAYKLHLARIPDYFWLAEDGLKIQSFGCQMWDAAFAIQAILACNVSEEYGPTLRKAHHFVKASQVRENPSGDFNAMYRHISKGAWTFSMHDHGWQVSDCTAEGLKAALLLSEMPSELVGGKMETERFYDAVNVILSLQSSNGGFPAWEPQKAYRWLEKFNPTEFFEDTMIEREYVECTGSAMQGLALFRKQFPQHRSKEIDRCIAKAIRYIENMQNPDGSWYGCWGICYTYGTWFAVEGLTACGKNCHNSLSLRKACQFLLSKQLPNAGWGESYLSSQNKVYTNLEGNRANLVQSSWALLSLTHAGQAEIDPTPIHRGMKLLINSQMEDGDFPQQEITGVFMRNCTLNYSSYRNIFPIWAMGEYRRQVLCAHSY</sequence>
<evidence type="ECO:0000250" key="1">
    <source>
        <dbReference type="UniProtKB" id="P48449"/>
    </source>
</evidence>
<evidence type="ECO:0000269" key="2">
    <source>
    </source>
</evidence>
<evidence type="ECO:0000305" key="3"/>
<name>LUPS_GLYGL</name>
<organism>
    <name type="scientific">Glycyrrhiza glabra</name>
    <name type="common">Licorice</name>
    <dbReference type="NCBI Taxonomy" id="49827"/>
    <lineage>
        <taxon>Eukaryota</taxon>
        <taxon>Viridiplantae</taxon>
        <taxon>Streptophyta</taxon>
        <taxon>Embryophyta</taxon>
        <taxon>Tracheophyta</taxon>
        <taxon>Spermatophyta</taxon>
        <taxon>Magnoliopsida</taxon>
        <taxon>eudicotyledons</taxon>
        <taxon>Gunneridae</taxon>
        <taxon>Pentapetalae</taxon>
        <taxon>rosids</taxon>
        <taxon>fabids</taxon>
        <taxon>Fabales</taxon>
        <taxon>Fabaceae</taxon>
        <taxon>Papilionoideae</taxon>
        <taxon>50 kb inversion clade</taxon>
        <taxon>NPAAA clade</taxon>
        <taxon>Hologalegina</taxon>
        <taxon>IRL clade</taxon>
        <taxon>Galegeae</taxon>
        <taxon>Glycyrrhiza</taxon>
    </lineage>
</organism>
<comment type="function">
    <text evidence="2">Oxidosqualene cyclase involved in the biosynthesis of lupeol. Required for the production of betulinic acid.</text>
</comment>
<comment type="catalytic activity">
    <reaction evidence="2">
        <text>(S)-2,3-epoxysqualene = lupeol</text>
        <dbReference type="Rhea" id="RHEA:31383"/>
        <dbReference type="ChEBI" id="CHEBI:6570"/>
        <dbReference type="ChEBI" id="CHEBI:15441"/>
        <dbReference type="EC" id="5.4.99.41"/>
    </reaction>
</comment>
<comment type="tissue specificity">
    <text evidence="2">Expressed in root nodules.</text>
</comment>
<comment type="developmental stage">
    <text evidence="2">Low expression in developing seedlings.</text>
</comment>
<comment type="induction">
    <text evidence="2">Down-regulated by methyl jasmonate (MeJA). No effect of gibberellin A3 (GA3).</text>
</comment>
<comment type="similarity">
    <text evidence="3">Belongs to the terpene cyclase/mutase family.</text>
</comment>
<reference key="1">
    <citation type="journal article" date="2004" name="Biol. Pharm. Bull.">
        <title>Differential expression of three oxidosqualene cyclase mRNAs in Glycyrrhiza glabra.</title>
        <authorList>
            <person name="Hayashi H."/>
            <person name="Huang P."/>
            <person name="Takada S."/>
            <person name="Obinata M."/>
            <person name="Inoue K."/>
            <person name="Shibuya M."/>
            <person name="Ebizuka Y."/>
        </authorList>
    </citation>
    <scope>NUCLEOTIDE SEQUENCE [MRNA]</scope>
    <scope>FUNCTION</scope>
    <scope>CATALYTIC ACTIVITY</scope>
    <scope>DEVELOPMENTAL STAGE</scope>
    <scope>INDUCTION</scope>
    <scope>TISSUE SPECIFICITY</scope>
</reference>
<dbReference type="EC" id="5.4.99.41"/>
<dbReference type="EMBL" id="AB116228">
    <property type="protein sequence ID" value="BAD08587.1"/>
    <property type="molecule type" value="mRNA"/>
</dbReference>
<dbReference type="SMR" id="Q764T8"/>
<dbReference type="KEGG" id="ag:BAD08587"/>
<dbReference type="BRENDA" id="5.4.99.41">
    <property type="organism ID" value="2487"/>
</dbReference>
<dbReference type="GO" id="GO:0005811">
    <property type="term" value="C:lipid droplet"/>
    <property type="evidence" value="ECO:0007669"/>
    <property type="project" value="InterPro"/>
</dbReference>
<dbReference type="GO" id="GO:0042299">
    <property type="term" value="F:lupeol synthase activity"/>
    <property type="evidence" value="ECO:0000314"/>
    <property type="project" value="UniProtKB"/>
</dbReference>
<dbReference type="GO" id="GO:0019745">
    <property type="term" value="P:pentacyclic triterpenoid biosynthetic process"/>
    <property type="evidence" value="ECO:0000314"/>
    <property type="project" value="UniProtKB"/>
</dbReference>
<dbReference type="CDD" id="cd02892">
    <property type="entry name" value="SQCY_1"/>
    <property type="match status" value="1"/>
</dbReference>
<dbReference type="FunFam" id="1.50.10.20:FF:000044">
    <property type="entry name" value="Lupeol synthase"/>
    <property type="match status" value="1"/>
</dbReference>
<dbReference type="FunFam" id="1.50.10.20:FF:000011">
    <property type="entry name" value="Terpene cyclase/mutase family member"/>
    <property type="match status" value="1"/>
</dbReference>
<dbReference type="Gene3D" id="1.50.10.20">
    <property type="match status" value="2"/>
</dbReference>
<dbReference type="InterPro" id="IPR032696">
    <property type="entry name" value="SQ_cyclase_C"/>
</dbReference>
<dbReference type="InterPro" id="IPR032697">
    <property type="entry name" value="SQ_cyclase_N"/>
</dbReference>
<dbReference type="InterPro" id="IPR018333">
    <property type="entry name" value="Squalene_cyclase"/>
</dbReference>
<dbReference type="InterPro" id="IPR002365">
    <property type="entry name" value="Terpene_synthase_CS"/>
</dbReference>
<dbReference type="InterPro" id="IPR008930">
    <property type="entry name" value="Terpenoid_cyclase/PrenylTrfase"/>
</dbReference>
<dbReference type="NCBIfam" id="TIGR01787">
    <property type="entry name" value="squalene_cyclas"/>
    <property type="match status" value="1"/>
</dbReference>
<dbReference type="PANTHER" id="PTHR11764">
    <property type="entry name" value="TERPENE CYCLASE/MUTASE FAMILY MEMBER"/>
    <property type="match status" value="1"/>
</dbReference>
<dbReference type="PANTHER" id="PTHR11764:SF19">
    <property type="entry name" value="TERPENE CYCLASE_MUTASE FAMILY MEMBER"/>
    <property type="match status" value="1"/>
</dbReference>
<dbReference type="Pfam" id="PF13243">
    <property type="entry name" value="SQHop_cyclase_C"/>
    <property type="match status" value="1"/>
</dbReference>
<dbReference type="Pfam" id="PF13249">
    <property type="entry name" value="SQHop_cyclase_N"/>
    <property type="match status" value="1"/>
</dbReference>
<dbReference type="SFLD" id="SFLDG01016">
    <property type="entry name" value="Prenyltransferase_Like_2"/>
    <property type="match status" value="1"/>
</dbReference>
<dbReference type="SUPFAM" id="SSF48239">
    <property type="entry name" value="Terpenoid cyclases/Protein prenyltransferases"/>
    <property type="match status" value="2"/>
</dbReference>
<dbReference type="PROSITE" id="PS01074">
    <property type="entry name" value="TERPENE_SYNTHASES"/>
    <property type="match status" value="1"/>
</dbReference>
<keyword id="KW-0413">Isomerase</keyword>
<keyword id="KW-0677">Repeat</keyword>
<protein>
    <recommendedName>
        <fullName>Lupeol synthase</fullName>
        <shortName>GgLUS1</shortName>
        <ecNumber>5.4.99.41</ecNumber>
    </recommendedName>
</protein>
<gene>
    <name type="primary">LUS1</name>
</gene>